<name>IF2_SALPK</name>
<evidence type="ECO:0000250" key="1"/>
<evidence type="ECO:0000255" key="2">
    <source>
        <dbReference type="HAMAP-Rule" id="MF_00100"/>
    </source>
</evidence>
<evidence type="ECO:0000256" key="3">
    <source>
        <dbReference type="SAM" id="MobiDB-lite"/>
    </source>
</evidence>
<dbReference type="EMBL" id="FM200053">
    <property type="protein sequence ID" value="CAR61193.1"/>
    <property type="molecule type" value="Genomic_DNA"/>
</dbReference>
<dbReference type="RefSeq" id="WP_000131177.1">
    <property type="nucleotide sequence ID" value="NC_011147.1"/>
</dbReference>
<dbReference type="SMR" id="B5BGJ5"/>
<dbReference type="KEGG" id="sek:SSPA2944"/>
<dbReference type="HOGENOM" id="CLU_006301_6_3_6"/>
<dbReference type="Proteomes" id="UP000001869">
    <property type="component" value="Chromosome"/>
</dbReference>
<dbReference type="GO" id="GO:0005829">
    <property type="term" value="C:cytosol"/>
    <property type="evidence" value="ECO:0007669"/>
    <property type="project" value="TreeGrafter"/>
</dbReference>
<dbReference type="GO" id="GO:0005525">
    <property type="term" value="F:GTP binding"/>
    <property type="evidence" value="ECO:0007669"/>
    <property type="project" value="UniProtKB-KW"/>
</dbReference>
<dbReference type="GO" id="GO:0003924">
    <property type="term" value="F:GTPase activity"/>
    <property type="evidence" value="ECO:0007669"/>
    <property type="project" value="UniProtKB-UniRule"/>
</dbReference>
<dbReference type="GO" id="GO:0097216">
    <property type="term" value="F:guanosine tetraphosphate binding"/>
    <property type="evidence" value="ECO:0007669"/>
    <property type="project" value="UniProtKB-ARBA"/>
</dbReference>
<dbReference type="GO" id="GO:0003743">
    <property type="term" value="F:translation initiation factor activity"/>
    <property type="evidence" value="ECO:0007669"/>
    <property type="project" value="UniProtKB-UniRule"/>
</dbReference>
<dbReference type="CDD" id="cd01887">
    <property type="entry name" value="IF2_eIF5B"/>
    <property type="match status" value="1"/>
</dbReference>
<dbReference type="CDD" id="cd03702">
    <property type="entry name" value="IF2_mtIF2_II"/>
    <property type="match status" value="1"/>
</dbReference>
<dbReference type="CDD" id="cd03692">
    <property type="entry name" value="mtIF2_IVc"/>
    <property type="match status" value="1"/>
</dbReference>
<dbReference type="FunFam" id="2.40.30.10:FF:000007">
    <property type="entry name" value="Translation initiation factor IF-2"/>
    <property type="match status" value="1"/>
</dbReference>
<dbReference type="FunFam" id="2.40.30.10:FF:000008">
    <property type="entry name" value="Translation initiation factor IF-2"/>
    <property type="match status" value="1"/>
</dbReference>
<dbReference type="FunFam" id="3.30.56.50:FF:000001">
    <property type="entry name" value="Translation initiation factor IF-2"/>
    <property type="match status" value="1"/>
</dbReference>
<dbReference type="FunFam" id="3.40.50.10050:FF:000001">
    <property type="entry name" value="Translation initiation factor IF-2"/>
    <property type="match status" value="1"/>
</dbReference>
<dbReference type="FunFam" id="3.40.50.300:FF:000019">
    <property type="entry name" value="Translation initiation factor IF-2"/>
    <property type="match status" value="1"/>
</dbReference>
<dbReference type="Gene3D" id="3.40.50.300">
    <property type="entry name" value="P-loop containing nucleotide triphosphate hydrolases"/>
    <property type="match status" value="1"/>
</dbReference>
<dbReference type="Gene3D" id="3.30.56.50">
    <property type="entry name" value="Putative DNA-binding domain, N-terminal subdomain of bacterial translation initiation factor IF2"/>
    <property type="match status" value="1"/>
</dbReference>
<dbReference type="Gene3D" id="2.40.30.10">
    <property type="entry name" value="Translation factors"/>
    <property type="match status" value="2"/>
</dbReference>
<dbReference type="Gene3D" id="3.40.50.10050">
    <property type="entry name" value="Translation initiation factor IF- 2, domain 3"/>
    <property type="match status" value="1"/>
</dbReference>
<dbReference type="HAMAP" id="MF_00100_B">
    <property type="entry name" value="IF_2_B"/>
    <property type="match status" value="1"/>
</dbReference>
<dbReference type="InterPro" id="IPR009061">
    <property type="entry name" value="DNA-bd_dom_put_sf"/>
</dbReference>
<dbReference type="InterPro" id="IPR053905">
    <property type="entry name" value="EF-G-like_DII"/>
</dbReference>
<dbReference type="InterPro" id="IPR004161">
    <property type="entry name" value="EFTu-like_2"/>
</dbReference>
<dbReference type="InterPro" id="IPR013575">
    <property type="entry name" value="IF2_assoc_dom_bac"/>
</dbReference>
<dbReference type="InterPro" id="IPR044145">
    <property type="entry name" value="IF2_II"/>
</dbReference>
<dbReference type="InterPro" id="IPR006847">
    <property type="entry name" value="IF2_N"/>
</dbReference>
<dbReference type="InterPro" id="IPR027417">
    <property type="entry name" value="P-loop_NTPase"/>
</dbReference>
<dbReference type="InterPro" id="IPR005225">
    <property type="entry name" value="Small_GTP-bd"/>
</dbReference>
<dbReference type="InterPro" id="IPR000795">
    <property type="entry name" value="T_Tr_GTP-bd_dom"/>
</dbReference>
<dbReference type="InterPro" id="IPR000178">
    <property type="entry name" value="TF_IF2_bacterial-like"/>
</dbReference>
<dbReference type="InterPro" id="IPR015760">
    <property type="entry name" value="TIF_IF2"/>
</dbReference>
<dbReference type="InterPro" id="IPR023115">
    <property type="entry name" value="TIF_IF2_dom3"/>
</dbReference>
<dbReference type="InterPro" id="IPR036925">
    <property type="entry name" value="TIF_IF2_dom3_sf"/>
</dbReference>
<dbReference type="InterPro" id="IPR009000">
    <property type="entry name" value="Transl_B-barrel_sf"/>
</dbReference>
<dbReference type="NCBIfam" id="TIGR00487">
    <property type="entry name" value="IF-2"/>
    <property type="match status" value="1"/>
</dbReference>
<dbReference type="NCBIfam" id="TIGR00231">
    <property type="entry name" value="small_GTP"/>
    <property type="match status" value="1"/>
</dbReference>
<dbReference type="PANTHER" id="PTHR43381:SF5">
    <property type="entry name" value="TR-TYPE G DOMAIN-CONTAINING PROTEIN"/>
    <property type="match status" value="1"/>
</dbReference>
<dbReference type="PANTHER" id="PTHR43381">
    <property type="entry name" value="TRANSLATION INITIATION FACTOR IF-2-RELATED"/>
    <property type="match status" value="1"/>
</dbReference>
<dbReference type="Pfam" id="PF22042">
    <property type="entry name" value="EF-G_D2"/>
    <property type="match status" value="1"/>
</dbReference>
<dbReference type="Pfam" id="PF00009">
    <property type="entry name" value="GTP_EFTU"/>
    <property type="match status" value="1"/>
</dbReference>
<dbReference type="Pfam" id="PF03144">
    <property type="entry name" value="GTP_EFTU_D2"/>
    <property type="match status" value="1"/>
</dbReference>
<dbReference type="Pfam" id="PF11987">
    <property type="entry name" value="IF-2"/>
    <property type="match status" value="1"/>
</dbReference>
<dbReference type="Pfam" id="PF08364">
    <property type="entry name" value="IF2_assoc"/>
    <property type="match status" value="1"/>
</dbReference>
<dbReference type="Pfam" id="PF04760">
    <property type="entry name" value="IF2_N"/>
    <property type="match status" value="2"/>
</dbReference>
<dbReference type="SUPFAM" id="SSF52156">
    <property type="entry name" value="Initiation factor IF2/eIF5b, domain 3"/>
    <property type="match status" value="1"/>
</dbReference>
<dbReference type="SUPFAM" id="SSF52540">
    <property type="entry name" value="P-loop containing nucleoside triphosphate hydrolases"/>
    <property type="match status" value="1"/>
</dbReference>
<dbReference type="SUPFAM" id="SSF46955">
    <property type="entry name" value="Putative DNA-binding domain"/>
    <property type="match status" value="1"/>
</dbReference>
<dbReference type="SUPFAM" id="SSF50447">
    <property type="entry name" value="Translation proteins"/>
    <property type="match status" value="2"/>
</dbReference>
<dbReference type="PROSITE" id="PS51722">
    <property type="entry name" value="G_TR_2"/>
    <property type="match status" value="1"/>
</dbReference>
<dbReference type="PROSITE" id="PS01176">
    <property type="entry name" value="IF2"/>
    <property type="match status" value="1"/>
</dbReference>
<proteinExistence type="inferred from homology"/>
<keyword id="KW-0963">Cytoplasm</keyword>
<keyword id="KW-0342">GTP-binding</keyword>
<keyword id="KW-0396">Initiation factor</keyword>
<keyword id="KW-0547">Nucleotide-binding</keyword>
<keyword id="KW-0648">Protein biosynthesis</keyword>
<organism>
    <name type="scientific">Salmonella paratyphi A (strain AKU_12601)</name>
    <dbReference type="NCBI Taxonomy" id="554290"/>
    <lineage>
        <taxon>Bacteria</taxon>
        <taxon>Pseudomonadati</taxon>
        <taxon>Pseudomonadota</taxon>
        <taxon>Gammaproteobacteria</taxon>
        <taxon>Enterobacterales</taxon>
        <taxon>Enterobacteriaceae</taxon>
        <taxon>Salmonella</taxon>
    </lineage>
</organism>
<feature type="chain" id="PRO_1000093823" description="Translation initiation factor IF-2">
    <location>
        <begin position="1"/>
        <end position="892"/>
    </location>
</feature>
<feature type="domain" description="tr-type G">
    <location>
        <begin position="391"/>
        <end position="560"/>
    </location>
</feature>
<feature type="region of interest" description="Disordered" evidence="3">
    <location>
        <begin position="88"/>
        <end position="305"/>
    </location>
</feature>
<feature type="region of interest" description="G1" evidence="1">
    <location>
        <begin position="400"/>
        <end position="407"/>
    </location>
</feature>
<feature type="region of interest" description="G2" evidence="1">
    <location>
        <begin position="425"/>
        <end position="429"/>
    </location>
</feature>
<feature type="region of interest" description="G3" evidence="1">
    <location>
        <begin position="446"/>
        <end position="449"/>
    </location>
</feature>
<feature type="region of interest" description="G4" evidence="1">
    <location>
        <begin position="500"/>
        <end position="503"/>
    </location>
</feature>
<feature type="region of interest" description="G5" evidence="1">
    <location>
        <begin position="536"/>
        <end position="538"/>
    </location>
</feature>
<feature type="compositionally biased region" description="Basic and acidic residues" evidence="3">
    <location>
        <begin position="93"/>
        <end position="159"/>
    </location>
</feature>
<feature type="compositionally biased region" description="Basic and acidic residues" evidence="3">
    <location>
        <begin position="166"/>
        <end position="216"/>
    </location>
</feature>
<feature type="compositionally biased region" description="Basic residues" evidence="3">
    <location>
        <begin position="254"/>
        <end position="269"/>
    </location>
</feature>
<feature type="compositionally biased region" description="Basic and acidic residues" evidence="3">
    <location>
        <begin position="270"/>
        <end position="282"/>
    </location>
</feature>
<feature type="binding site" evidence="2">
    <location>
        <begin position="400"/>
        <end position="407"/>
    </location>
    <ligand>
        <name>GTP</name>
        <dbReference type="ChEBI" id="CHEBI:37565"/>
    </ligand>
</feature>
<feature type="binding site" evidence="2">
    <location>
        <begin position="446"/>
        <end position="450"/>
    </location>
    <ligand>
        <name>GTP</name>
        <dbReference type="ChEBI" id="CHEBI:37565"/>
    </ligand>
</feature>
<feature type="binding site" evidence="2">
    <location>
        <begin position="500"/>
        <end position="503"/>
    </location>
    <ligand>
        <name>GTP</name>
        <dbReference type="ChEBI" id="CHEBI:37565"/>
    </ligand>
</feature>
<comment type="function">
    <text evidence="2">One of the essential components for the initiation of protein synthesis. Protects formylmethionyl-tRNA from spontaneous hydrolysis and promotes its binding to the 30S ribosomal subunits. Also involved in the hydrolysis of GTP during the formation of the 70S ribosomal complex.</text>
</comment>
<comment type="subcellular location">
    <subcellularLocation>
        <location evidence="2">Cytoplasm</location>
    </subcellularLocation>
</comment>
<comment type="similarity">
    <text evidence="2">Belongs to the TRAFAC class translation factor GTPase superfamily. Classic translation factor GTPase family. IF-2 subfamily.</text>
</comment>
<reference key="1">
    <citation type="journal article" date="2009" name="BMC Genomics">
        <title>Pseudogene accumulation in the evolutionary histories of Salmonella enterica serovars Paratyphi A and Typhi.</title>
        <authorList>
            <person name="Holt K.E."/>
            <person name="Thomson N.R."/>
            <person name="Wain J."/>
            <person name="Langridge G.C."/>
            <person name="Hasan R."/>
            <person name="Bhutta Z.A."/>
            <person name="Quail M.A."/>
            <person name="Norbertczak H."/>
            <person name="Walker D."/>
            <person name="Simmonds M."/>
            <person name="White B."/>
            <person name="Bason N."/>
            <person name="Mungall K."/>
            <person name="Dougan G."/>
            <person name="Parkhill J."/>
        </authorList>
    </citation>
    <scope>NUCLEOTIDE SEQUENCE [LARGE SCALE GENOMIC DNA]</scope>
    <source>
        <strain>AKU_12601</strain>
    </source>
</reference>
<accession>B5BGJ5</accession>
<gene>
    <name evidence="2" type="primary">infB</name>
    <name type="ordered locus">SSPA2944</name>
</gene>
<sequence>MTDLTLKALAAERQVSVDRLVQQFADAGIRKSADDSVSAQEKQTLLAHLNREAVSGPDKLTLQRKTRSTLNIPGTGGKSKSVQIEVRKKRTFVKRDPQEAERLAAEEQAQREAEEQARREAEEQAKREAQQKAEREAAEQAKREAAEKAKREAAEKDKVSNQQTDDMTKTAQAEKARRENEAAELKRKAEEEARRKLEEEARRVAEEARRMAEENKWTATPEPVEDTSDYHVTTSQHARQAEDENDREVEGGRGRGRNAKAARPAKKGKHAESKADREEARAAVRGGKGGKRKGSSLQQGFQKPAQAVNRDVVIGETITVGELANKMAVKGSQVIKAMMKLGAMVTINQVIDQETAQLVAEEMGHKVILRRENELEEAVMSDRDTGAAAEPRAPVVTIMGHVDHGKTSLLDYIRSTKVASGEAGGITQHIGAYHVETDNGMITFLDTPGHAAFTSMRARGAQATDIVVLVVAADDGVMPQTIEAIQHAKAAGVPVVVAVNKIDKPEADPDRVKNELSQYGILPEEWGGESQFVHVSAKAGTGIDELLDAILLQAEVLELKAVRKGMASGAVIESFLDKGRGPVATVLVREGTLHKGDIVLCGFEYGRVRAMRNELGQEVLEAGPSIPVEILGLSGVPAAGDEVTVVRDEKKAREVALYRQGKFREVKLARQQKSKLENMFANMTEGEVHEVNIVLKADVQGSVEAISDSLLKLSTDEVKVKIIGSGVGGITETDATLAAASNAILVGFNVRADASARKVIEFESLDLRYYSVIYNLIDEVKAAMSGMLSPELKQQIIGLAEVRDVFKSPKFGAIAGCMVTEGTIKRHNPIRVLRDNVVIYEGELESLRRFKDDVNEVRNGMECGIGVKNYNDVRVGDMIEVFEIIEIQRTIA</sequence>
<protein>
    <recommendedName>
        <fullName evidence="2">Translation initiation factor IF-2</fullName>
    </recommendedName>
</protein>